<gene>
    <name type="primary">MIC60</name>
    <name type="ORF">HCBG_07030</name>
</gene>
<evidence type="ECO:0000250" key="1"/>
<evidence type="ECO:0000255" key="2"/>
<evidence type="ECO:0000256" key="3">
    <source>
        <dbReference type="SAM" id="MobiDB-lite"/>
    </source>
</evidence>
<evidence type="ECO:0000305" key="4"/>
<accession>C0NUJ9</accession>
<sequence length="685" mass="75882">MLRTSIASSRPLLPSSVCPKAPAQWLCTSRARRVNTATRRYHALARKSNAGRRCSLTPNTATTSQFFQKAASSTSTKPPGPSDADVRSPASPSSRSSLRPESIPKPPQSPPVQGQTSPGSEVLPPDHESSTPPPPPGPKSSRLRKLLYLFLTAGLAYAGGVWYSLRSDNFYDFFTEYIPYGEEAVLYLEERDFRNRFPHVTKQINRRVTVPKDEGAQVTIPSGSGLSWKVAEEQQEATDMTKKGRRMGTAHANEPTKDIKVAEKAKEEVKSKSAAKKEDVAANIPIQEALEPQPAKTEEKNLEAPRQPAVPAVTAIERLVQDKADEPVVQDLVKVFNDVISVISADESASKFAGPIAKAKEELQRIGDRIVALKKDAQESAQEEIRNAHAAFDKSAAELIRRIDEVRTQDAAEFREEFESEREKIARSYQEKVNTELQRAHEVAEQRLRNELVEQAIELNRKFLSDVKTLVENEREGRLSKLAELSANVAELERLTAGWSDVVDINLKTQQLQVAVDAVRTTLENSDVPRPFVRELAAVKELASNDEVVAAAIASISPAAYQRGIPSAAQLVDRFRRVASEVRKARLLPENAGITSHAASLVLSKVMLKKQGLPTSDDVESILTRTENFLEEGNFDEAAREMNSLQGWAKLLSKDWLADVRRVLEVKQALEIIETEARLRCLQVE</sequence>
<protein>
    <recommendedName>
        <fullName>MICOS complex subunit MIC60</fullName>
    </recommendedName>
    <alternativeName>
        <fullName>Mitofilin</fullName>
    </alternativeName>
</protein>
<dbReference type="EMBL" id="GG663372">
    <property type="protein sequence ID" value="EEH05079.1"/>
    <property type="molecule type" value="Genomic_DNA"/>
</dbReference>
<dbReference type="SMR" id="C0NUJ9"/>
<dbReference type="FunCoup" id="C0NUJ9">
    <property type="interactions" value="167"/>
</dbReference>
<dbReference type="STRING" id="447093.C0NUJ9"/>
<dbReference type="VEuPathDB" id="FungiDB:I7I50_12086"/>
<dbReference type="HOGENOM" id="CLU_008024_1_2_1"/>
<dbReference type="InParanoid" id="C0NUJ9"/>
<dbReference type="Proteomes" id="UP000001631">
    <property type="component" value="Unassembled WGS sequence"/>
</dbReference>
<dbReference type="GO" id="GO:0061617">
    <property type="term" value="C:MICOS complex"/>
    <property type="evidence" value="ECO:0007669"/>
    <property type="project" value="TreeGrafter"/>
</dbReference>
<dbReference type="GO" id="GO:0042407">
    <property type="term" value="P:cristae formation"/>
    <property type="evidence" value="ECO:0007669"/>
    <property type="project" value="TreeGrafter"/>
</dbReference>
<dbReference type="InterPro" id="IPR019133">
    <property type="entry name" value="MIC60"/>
</dbReference>
<dbReference type="PANTHER" id="PTHR15415:SF7">
    <property type="entry name" value="MICOS COMPLEX SUBUNIT MIC60"/>
    <property type="match status" value="1"/>
</dbReference>
<dbReference type="PANTHER" id="PTHR15415">
    <property type="entry name" value="MITOFILIN"/>
    <property type="match status" value="1"/>
</dbReference>
<dbReference type="Pfam" id="PF09731">
    <property type="entry name" value="Mitofilin"/>
    <property type="match status" value="2"/>
</dbReference>
<keyword id="KW-0175">Coiled coil</keyword>
<keyword id="KW-0472">Membrane</keyword>
<keyword id="KW-0496">Mitochondrion</keyword>
<keyword id="KW-0999">Mitochondrion inner membrane</keyword>
<keyword id="KW-1185">Reference proteome</keyword>
<keyword id="KW-0809">Transit peptide</keyword>
<keyword id="KW-0812">Transmembrane</keyword>
<keyword id="KW-1133">Transmembrane helix</keyword>
<comment type="function">
    <text evidence="1">Component of the MICOS complex, a large protein complex of the mitochondrial inner membrane that plays crucial roles in the maintenance of crista junctions, inner membrane architecture, and formation of contact sites to the outer membrane. Plays a role in keeping cristae membranes connected to the inner boundary membrane. Also promotes protein import via the mitochondrial intermembrane space assembly (MIA) pathway (By similarity).</text>
</comment>
<comment type="subunit">
    <text evidence="1">Component of the mitochondrial contact site and cristae organizing system (MICOS) complex.</text>
</comment>
<comment type="subcellular location">
    <subcellularLocation>
        <location evidence="1">Mitochondrion inner membrane</location>
        <topology evidence="1">Single-pass membrane protein</topology>
    </subcellularLocation>
</comment>
<comment type="similarity">
    <text evidence="4">Belongs to the MICOS complex subunit Mic60 family.</text>
</comment>
<name>MIC60_AJECG</name>
<proteinExistence type="inferred from homology"/>
<organism>
    <name type="scientific">Ajellomyces capsulatus (strain G186AR / H82 / ATCC MYA-2454 / RMSCC 2432)</name>
    <name type="common">Darling's disease fungus</name>
    <name type="synonym">Histoplasma capsulatum</name>
    <dbReference type="NCBI Taxonomy" id="447093"/>
    <lineage>
        <taxon>Eukaryota</taxon>
        <taxon>Fungi</taxon>
        <taxon>Dikarya</taxon>
        <taxon>Ascomycota</taxon>
        <taxon>Pezizomycotina</taxon>
        <taxon>Eurotiomycetes</taxon>
        <taxon>Eurotiomycetidae</taxon>
        <taxon>Onygenales</taxon>
        <taxon>Ajellomycetaceae</taxon>
        <taxon>Histoplasma</taxon>
    </lineage>
</organism>
<feature type="transit peptide" description="Mitochondrion" evidence="2">
    <location>
        <begin position="1"/>
        <end position="42"/>
    </location>
</feature>
<feature type="chain" id="PRO_0000406637" description="MICOS complex subunit MIC60">
    <location>
        <begin position="43"/>
        <end position="685"/>
    </location>
</feature>
<feature type="topological domain" description="Mitochondrial matrix" evidence="2">
    <location>
        <begin position="43"/>
        <end position="145"/>
    </location>
</feature>
<feature type="transmembrane region" description="Helical" evidence="2">
    <location>
        <begin position="146"/>
        <end position="165"/>
    </location>
</feature>
<feature type="topological domain" description="Mitochondrial intermembrane" evidence="2">
    <location>
        <begin position="166"/>
        <end position="685"/>
    </location>
</feature>
<feature type="region of interest" description="Disordered" evidence="3">
    <location>
        <begin position="66"/>
        <end position="140"/>
    </location>
</feature>
<feature type="region of interest" description="Disordered" evidence="3">
    <location>
        <begin position="283"/>
        <end position="307"/>
    </location>
</feature>
<feature type="coiled-coil region" evidence="2">
    <location>
        <begin position="356"/>
        <end position="494"/>
    </location>
</feature>
<feature type="compositionally biased region" description="Polar residues" evidence="3">
    <location>
        <begin position="66"/>
        <end position="77"/>
    </location>
</feature>
<feature type="compositionally biased region" description="Low complexity" evidence="3">
    <location>
        <begin position="87"/>
        <end position="101"/>
    </location>
</feature>
<reference key="1">
    <citation type="submission" date="2009-02" db="EMBL/GenBank/DDBJ databases">
        <title>The genome sequence of Ajellomyces capsulatus strain G186AR.</title>
        <authorList>
            <person name="Champion M."/>
            <person name="Cuomo C.A."/>
            <person name="Ma L.-J."/>
            <person name="Henn M.R."/>
            <person name="Sil A."/>
            <person name="Goldman B."/>
            <person name="Young S.K."/>
            <person name="Kodira C.D."/>
            <person name="Zeng Q."/>
            <person name="Koehrsen M."/>
            <person name="Alvarado L."/>
            <person name="Berlin A."/>
            <person name="Borenstein D."/>
            <person name="Chen Z."/>
            <person name="Engels R."/>
            <person name="Freedman E."/>
            <person name="Gellesch M."/>
            <person name="Goldberg J."/>
            <person name="Griggs A."/>
            <person name="Gujja S."/>
            <person name="Heiman D."/>
            <person name="Hepburn T."/>
            <person name="Howarth C."/>
            <person name="Jen D."/>
            <person name="Larson L."/>
            <person name="Lewis B."/>
            <person name="Mehta T."/>
            <person name="Park D."/>
            <person name="Pearson M."/>
            <person name="Roberts A."/>
            <person name="Saif S."/>
            <person name="Shea T."/>
            <person name="Shenoy N."/>
            <person name="Sisk P."/>
            <person name="Stolte C."/>
            <person name="Sykes S."/>
            <person name="Walk T."/>
            <person name="White J."/>
            <person name="Yandava C."/>
            <person name="Klein B."/>
            <person name="McEwen J.G."/>
            <person name="Puccia R."/>
            <person name="Goldman G.H."/>
            <person name="Felipe M.S."/>
            <person name="Nino-Vega G."/>
            <person name="San-Blas G."/>
            <person name="Taylor J."/>
            <person name="Mendoza L."/>
            <person name="Galagan J.E."/>
            <person name="Nusbaum C."/>
            <person name="Birren B.W."/>
        </authorList>
    </citation>
    <scope>NUCLEOTIDE SEQUENCE [LARGE SCALE GENOMIC DNA]</scope>
    <source>
        <strain>G186AR / H82 / ATCC MYA-2454 / RMSCC 2432</strain>
    </source>
</reference>